<accession>Q2SBF2</accession>
<proteinExistence type="inferred from homology"/>
<organism>
    <name type="scientific">Hahella chejuensis (strain KCTC 2396)</name>
    <dbReference type="NCBI Taxonomy" id="349521"/>
    <lineage>
        <taxon>Bacteria</taxon>
        <taxon>Pseudomonadati</taxon>
        <taxon>Pseudomonadota</taxon>
        <taxon>Gammaproteobacteria</taxon>
        <taxon>Oceanospirillales</taxon>
        <taxon>Hahellaceae</taxon>
        <taxon>Hahella</taxon>
    </lineage>
</organism>
<dbReference type="EC" id="3.1.-.-" evidence="1"/>
<dbReference type="EMBL" id="CP000155">
    <property type="protein sequence ID" value="ABC32022.1"/>
    <property type="molecule type" value="Genomic_DNA"/>
</dbReference>
<dbReference type="RefSeq" id="WP_011399086.1">
    <property type="nucleotide sequence ID" value="NC_007645.1"/>
</dbReference>
<dbReference type="SMR" id="Q2SBF2"/>
<dbReference type="STRING" id="349521.HCH_05350"/>
<dbReference type="KEGG" id="hch:HCH_05350"/>
<dbReference type="eggNOG" id="COG0319">
    <property type="taxonomic scope" value="Bacteria"/>
</dbReference>
<dbReference type="HOGENOM" id="CLU_106710_0_1_6"/>
<dbReference type="OrthoDB" id="9807740at2"/>
<dbReference type="Proteomes" id="UP000000238">
    <property type="component" value="Chromosome"/>
</dbReference>
<dbReference type="GO" id="GO:0005737">
    <property type="term" value="C:cytoplasm"/>
    <property type="evidence" value="ECO:0007669"/>
    <property type="project" value="UniProtKB-SubCell"/>
</dbReference>
<dbReference type="GO" id="GO:0004222">
    <property type="term" value="F:metalloendopeptidase activity"/>
    <property type="evidence" value="ECO:0007669"/>
    <property type="project" value="InterPro"/>
</dbReference>
<dbReference type="GO" id="GO:0004521">
    <property type="term" value="F:RNA endonuclease activity"/>
    <property type="evidence" value="ECO:0007669"/>
    <property type="project" value="UniProtKB-UniRule"/>
</dbReference>
<dbReference type="GO" id="GO:0008270">
    <property type="term" value="F:zinc ion binding"/>
    <property type="evidence" value="ECO:0007669"/>
    <property type="project" value="UniProtKB-UniRule"/>
</dbReference>
<dbReference type="GO" id="GO:0006364">
    <property type="term" value="P:rRNA processing"/>
    <property type="evidence" value="ECO:0007669"/>
    <property type="project" value="UniProtKB-UniRule"/>
</dbReference>
<dbReference type="Gene3D" id="3.40.390.30">
    <property type="entry name" value="Metalloproteases ('zincins'), catalytic domain"/>
    <property type="match status" value="1"/>
</dbReference>
<dbReference type="HAMAP" id="MF_00009">
    <property type="entry name" value="Endoribonucl_YbeY"/>
    <property type="match status" value="1"/>
</dbReference>
<dbReference type="InterPro" id="IPR023091">
    <property type="entry name" value="MetalPrtase_cat_dom_sf_prd"/>
</dbReference>
<dbReference type="InterPro" id="IPR002036">
    <property type="entry name" value="YbeY"/>
</dbReference>
<dbReference type="InterPro" id="IPR020549">
    <property type="entry name" value="YbeY_CS"/>
</dbReference>
<dbReference type="NCBIfam" id="TIGR00043">
    <property type="entry name" value="rRNA maturation RNase YbeY"/>
    <property type="match status" value="1"/>
</dbReference>
<dbReference type="PANTHER" id="PTHR46986">
    <property type="entry name" value="ENDORIBONUCLEASE YBEY, CHLOROPLASTIC"/>
    <property type="match status" value="1"/>
</dbReference>
<dbReference type="PANTHER" id="PTHR46986:SF1">
    <property type="entry name" value="ENDORIBONUCLEASE YBEY, CHLOROPLASTIC"/>
    <property type="match status" value="1"/>
</dbReference>
<dbReference type="Pfam" id="PF02130">
    <property type="entry name" value="YbeY"/>
    <property type="match status" value="1"/>
</dbReference>
<dbReference type="SUPFAM" id="SSF55486">
    <property type="entry name" value="Metalloproteases ('zincins'), catalytic domain"/>
    <property type="match status" value="1"/>
</dbReference>
<dbReference type="PROSITE" id="PS01306">
    <property type="entry name" value="UPF0054"/>
    <property type="match status" value="1"/>
</dbReference>
<reference key="1">
    <citation type="journal article" date="2005" name="Nucleic Acids Res.">
        <title>Genomic blueprint of Hahella chejuensis, a marine microbe producing an algicidal agent.</title>
        <authorList>
            <person name="Jeong H."/>
            <person name="Yim J.H."/>
            <person name="Lee C."/>
            <person name="Choi S.-H."/>
            <person name="Park Y.K."/>
            <person name="Yoon S.H."/>
            <person name="Hur C.-G."/>
            <person name="Kang H.-Y."/>
            <person name="Kim D."/>
            <person name="Lee H.H."/>
            <person name="Park K.H."/>
            <person name="Park S.-H."/>
            <person name="Park H.-S."/>
            <person name="Lee H.K."/>
            <person name="Oh T.K."/>
            <person name="Kim J.F."/>
        </authorList>
    </citation>
    <scope>NUCLEOTIDE SEQUENCE [LARGE SCALE GENOMIC DNA]</scope>
    <source>
        <strain>KCTC 2396</strain>
    </source>
</reference>
<keyword id="KW-0963">Cytoplasm</keyword>
<keyword id="KW-0255">Endonuclease</keyword>
<keyword id="KW-0378">Hydrolase</keyword>
<keyword id="KW-0479">Metal-binding</keyword>
<keyword id="KW-0540">Nuclease</keyword>
<keyword id="KW-1185">Reference proteome</keyword>
<keyword id="KW-0690">Ribosome biogenesis</keyword>
<keyword id="KW-0698">rRNA processing</keyword>
<keyword id="KW-0862">Zinc</keyword>
<gene>
    <name evidence="1" type="primary">ybeY</name>
    <name type="ordered locus">HCH_05350</name>
</gene>
<name>YBEY_HAHCH</name>
<comment type="function">
    <text evidence="1">Single strand-specific metallo-endoribonuclease involved in late-stage 70S ribosome quality control and in maturation of the 3' terminus of the 16S rRNA.</text>
</comment>
<comment type="cofactor">
    <cofactor evidence="1">
        <name>Zn(2+)</name>
        <dbReference type="ChEBI" id="CHEBI:29105"/>
    </cofactor>
    <text evidence="1">Binds 1 zinc ion.</text>
</comment>
<comment type="subcellular location">
    <subcellularLocation>
        <location evidence="1">Cytoplasm</location>
    </subcellularLocation>
</comment>
<comment type="similarity">
    <text evidence="1">Belongs to the endoribonuclease YbeY family.</text>
</comment>
<sequence>MSLDVDIQIASEEADLPSEEQLILWAQAALRETGDREVTIRIVDAEESRELNAQYRGKDKPTNVLSFPFENPPGLTLPLLGDLVICAPVVFNEAVEQQKTAAAHWAHMVIHGMLHLQGYDHIIDEEAEVMESLETELVTSLGFPPPYATNSSLAEG</sequence>
<protein>
    <recommendedName>
        <fullName evidence="1">Endoribonuclease YbeY</fullName>
        <ecNumber evidence="1">3.1.-.-</ecNumber>
    </recommendedName>
</protein>
<evidence type="ECO:0000255" key="1">
    <source>
        <dbReference type="HAMAP-Rule" id="MF_00009"/>
    </source>
</evidence>
<feature type="chain" id="PRO_0000284217" description="Endoribonuclease YbeY">
    <location>
        <begin position="1"/>
        <end position="156"/>
    </location>
</feature>
<feature type="binding site" evidence="1">
    <location>
        <position position="111"/>
    </location>
    <ligand>
        <name>Zn(2+)</name>
        <dbReference type="ChEBI" id="CHEBI:29105"/>
        <note>catalytic</note>
    </ligand>
</feature>
<feature type="binding site" evidence="1">
    <location>
        <position position="115"/>
    </location>
    <ligand>
        <name>Zn(2+)</name>
        <dbReference type="ChEBI" id="CHEBI:29105"/>
        <note>catalytic</note>
    </ligand>
</feature>
<feature type="binding site" evidence="1">
    <location>
        <position position="121"/>
    </location>
    <ligand>
        <name>Zn(2+)</name>
        <dbReference type="ChEBI" id="CHEBI:29105"/>
        <note>catalytic</note>
    </ligand>
</feature>